<protein>
    <recommendedName>
        <fullName evidence="1">Glucose-1-phosphate adenylyltransferase</fullName>
        <ecNumber evidence="1">2.7.7.27</ecNumber>
    </recommendedName>
    <alternativeName>
        <fullName evidence="1">ADP-glucose pyrophosphorylase</fullName>
        <shortName evidence="1">ADPGlc PPase</shortName>
    </alternativeName>
    <alternativeName>
        <fullName evidence="1">ADP-glucose synthase</fullName>
    </alternativeName>
</protein>
<accession>B7LSE1</accession>
<comment type="function">
    <text evidence="1">Involved in the biosynthesis of ADP-glucose, a building block required for the elongation reactions to produce glycogen. Catalyzes the reaction between ATP and alpha-D-glucose 1-phosphate (G1P) to produce pyrophosphate and ADP-Glc.</text>
</comment>
<comment type="catalytic activity">
    <reaction evidence="1">
        <text>alpha-D-glucose 1-phosphate + ATP + H(+) = ADP-alpha-D-glucose + diphosphate</text>
        <dbReference type="Rhea" id="RHEA:12120"/>
        <dbReference type="ChEBI" id="CHEBI:15378"/>
        <dbReference type="ChEBI" id="CHEBI:30616"/>
        <dbReference type="ChEBI" id="CHEBI:33019"/>
        <dbReference type="ChEBI" id="CHEBI:57498"/>
        <dbReference type="ChEBI" id="CHEBI:58601"/>
        <dbReference type="EC" id="2.7.7.27"/>
    </reaction>
</comment>
<comment type="activity regulation">
    <text evidence="1">Allosterically activated by fructose-1,6-bisphosphate (F16BP) and inhibited by AMP.</text>
</comment>
<comment type="pathway">
    <text evidence="1">Glycan biosynthesis; glycogen biosynthesis.</text>
</comment>
<comment type="subunit">
    <text evidence="1">Homotetramer.</text>
</comment>
<comment type="similarity">
    <text evidence="1">Belongs to the bacterial/plant glucose-1-phosphate adenylyltransferase family.</text>
</comment>
<name>GLGC_ESCF3</name>
<keyword id="KW-0021">Allosteric enzyme</keyword>
<keyword id="KW-0067">ATP-binding</keyword>
<keyword id="KW-0119">Carbohydrate metabolism</keyword>
<keyword id="KW-0320">Glycogen biosynthesis</keyword>
<keyword id="KW-0321">Glycogen metabolism</keyword>
<keyword id="KW-0547">Nucleotide-binding</keyword>
<keyword id="KW-0548">Nucleotidyltransferase</keyword>
<keyword id="KW-0808">Transferase</keyword>
<dbReference type="EC" id="2.7.7.27" evidence="1"/>
<dbReference type="EMBL" id="CU928158">
    <property type="protein sequence ID" value="CAQ90884.1"/>
    <property type="molecule type" value="Genomic_DNA"/>
</dbReference>
<dbReference type="RefSeq" id="WP_000232912.1">
    <property type="nucleotide sequence ID" value="NC_011740.1"/>
</dbReference>
<dbReference type="SMR" id="B7LSE1"/>
<dbReference type="GeneID" id="75059985"/>
<dbReference type="KEGG" id="efe:EFER_3407"/>
<dbReference type="HOGENOM" id="CLU_029499_14_1_6"/>
<dbReference type="OrthoDB" id="9801810at2"/>
<dbReference type="UniPathway" id="UPA00164"/>
<dbReference type="Proteomes" id="UP000000745">
    <property type="component" value="Chromosome"/>
</dbReference>
<dbReference type="GO" id="GO:0005524">
    <property type="term" value="F:ATP binding"/>
    <property type="evidence" value="ECO:0007669"/>
    <property type="project" value="UniProtKB-KW"/>
</dbReference>
<dbReference type="GO" id="GO:0008878">
    <property type="term" value="F:glucose-1-phosphate adenylyltransferase activity"/>
    <property type="evidence" value="ECO:0007669"/>
    <property type="project" value="UniProtKB-UniRule"/>
</dbReference>
<dbReference type="GO" id="GO:0005978">
    <property type="term" value="P:glycogen biosynthetic process"/>
    <property type="evidence" value="ECO:0007669"/>
    <property type="project" value="UniProtKB-UniRule"/>
</dbReference>
<dbReference type="CDD" id="cd02508">
    <property type="entry name" value="ADP_Glucose_PP"/>
    <property type="match status" value="1"/>
</dbReference>
<dbReference type="CDD" id="cd04651">
    <property type="entry name" value="LbH_G1P_AT_C"/>
    <property type="match status" value="1"/>
</dbReference>
<dbReference type="FunFam" id="2.160.10.10:FF:000006">
    <property type="entry name" value="Glucose-1-phosphate adenylyltransferase"/>
    <property type="match status" value="1"/>
</dbReference>
<dbReference type="FunFam" id="3.90.550.10:FF:000014">
    <property type="entry name" value="Glucose-1-phosphate adenylyltransferase"/>
    <property type="match status" value="1"/>
</dbReference>
<dbReference type="Gene3D" id="2.160.10.10">
    <property type="entry name" value="Hexapeptide repeat proteins"/>
    <property type="match status" value="1"/>
</dbReference>
<dbReference type="Gene3D" id="3.90.550.10">
    <property type="entry name" value="Spore Coat Polysaccharide Biosynthesis Protein SpsA, Chain A"/>
    <property type="match status" value="1"/>
</dbReference>
<dbReference type="HAMAP" id="MF_00624">
    <property type="entry name" value="GlgC"/>
    <property type="match status" value="1"/>
</dbReference>
<dbReference type="InterPro" id="IPR011831">
    <property type="entry name" value="ADP-Glc_PPase"/>
</dbReference>
<dbReference type="InterPro" id="IPR005836">
    <property type="entry name" value="ADP_Glu_pyroP_CS"/>
</dbReference>
<dbReference type="InterPro" id="IPR023049">
    <property type="entry name" value="GlgC_bac"/>
</dbReference>
<dbReference type="InterPro" id="IPR056818">
    <property type="entry name" value="GlmU/GlgC-like_hexapep"/>
</dbReference>
<dbReference type="InterPro" id="IPR005835">
    <property type="entry name" value="NTP_transferase_dom"/>
</dbReference>
<dbReference type="InterPro" id="IPR029044">
    <property type="entry name" value="Nucleotide-diphossugar_trans"/>
</dbReference>
<dbReference type="InterPro" id="IPR011004">
    <property type="entry name" value="Trimer_LpxA-like_sf"/>
</dbReference>
<dbReference type="NCBIfam" id="TIGR02091">
    <property type="entry name" value="glgC"/>
    <property type="match status" value="1"/>
</dbReference>
<dbReference type="NCBIfam" id="NF001947">
    <property type="entry name" value="PRK00725.1"/>
    <property type="match status" value="1"/>
</dbReference>
<dbReference type="NCBIfam" id="NF002023">
    <property type="entry name" value="PRK00844.1"/>
    <property type="match status" value="1"/>
</dbReference>
<dbReference type="PANTHER" id="PTHR43523:SF2">
    <property type="entry name" value="GLUCOSE-1-PHOSPHATE ADENYLYLTRANSFERASE"/>
    <property type="match status" value="1"/>
</dbReference>
<dbReference type="PANTHER" id="PTHR43523">
    <property type="entry name" value="GLUCOSE-1-PHOSPHATE ADENYLYLTRANSFERASE-RELATED"/>
    <property type="match status" value="1"/>
</dbReference>
<dbReference type="Pfam" id="PF24894">
    <property type="entry name" value="Hexapep_GlmU"/>
    <property type="match status" value="1"/>
</dbReference>
<dbReference type="Pfam" id="PF00483">
    <property type="entry name" value="NTP_transferase"/>
    <property type="match status" value="1"/>
</dbReference>
<dbReference type="SUPFAM" id="SSF53448">
    <property type="entry name" value="Nucleotide-diphospho-sugar transferases"/>
    <property type="match status" value="1"/>
</dbReference>
<dbReference type="SUPFAM" id="SSF51161">
    <property type="entry name" value="Trimeric LpxA-like enzymes"/>
    <property type="match status" value="1"/>
</dbReference>
<dbReference type="PROSITE" id="PS00808">
    <property type="entry name" value="ADP_GLC_PYROPHOSPH_1"/>
    <property type="match status" value="1"/>
</dbReference>
<dbReference type="PROSITE" id="PS00809">
    <property type="entry name" value="ADP_GLC_PYROPHOSPH_2"/>
    <property type="match status" value="1"/>
</dbReference>
<dbReference type="PROSITE" id="PS00810">
    <property type="entry name" value="ADP_GLC_PYROPHOSPH_3"/>
    <property type="match status" value="1"/>
</dbReference>
<evidence type="ECO:0000255" key="1">
    <source>
        <dbReference type="HAMAP-Rule" id="MF_00624"/>
    </source>
</evidence>
<gene>
    <name evidence="1" type="primary">glgC</name>
    <name type="ordered locus">EFER_3407</name>
</gene>
<reference key="1">
    <citation type="journal article" date="2009" name="PLoS Genet.">
        <title>Organised genome dynamics in the Escherichia coli species results in highly diverse adaptive paths.</title>
        <authorList>
            <person name="Touchon M."/>
            <person name="Hoede C."/>
            <person name="Tenaillon O."/>
            <person name="Barbe V."/>
            <person name="Baeriswyl S."/>
            <person name="Bidet P."/>
            <person name="Bingen E."/>
            <person name="Bonacorsi S."/>
            <person name="Bouchier C."/>
            <person name="Bouvet O."/>
            <person name="Calteau A."/>
            <person name="Chiapello H."/>
            <person name="Clermont O."/>
            <person name="Cruveiller S."/>
            <person name="Danchin A."/>
            <person name="Diard M."/>
            <person name="Dossat C."/>
            <person name="Karoui M.E."/>
            <person name="Frapy E."/>
            <person name="Garry L."/>
            <person name="Ghigo J.M."/>
            <person name="Gilles A.M."/>
            <person name="Johnson J."/>
            <person name="Le Bouguenec C."/>
            <person name="Lescat M."/>
            <person name="Mangenot S."/>
            <person name="Martinez-Jehanne V."/>
            <person name="Matic I."/>
            <person name="Nassif X."/>
            <person name="Oztas S."/>
            <person name="Petit M.A."/>
            <person name="Pichon C."/>
            <person name="Rouy Z."/>
            <person name="Ruf C.S."/>
            <person name="Schneider D."/>
            <person name="Tourret J."/>
            <person name="Vacherie B."/>
            <person name="Vallenet D."/>
            <person name="Medigue C."/>
            <person name="Rocha E.P.C."/>
            <person name="Denamur E."/>
        </authorList>
    </citation>
    <scope>NUCLEOTIDE SEQUENCE [LARGE SCALE GENOMIC DNA]</scope>
    <source>
        <strain>ATCC 35469 / DSM 13698 / BCRC 15582 / CCUG 18766 / IAM 14443 / JCM 21226 / LMG 7866 / NBRC 102419 / NCTC 12128 / CDC 0568-73</strain>
    </source>
</reference>
<organism>
    <name type="scientific">Escherichia fergusonii (strain ATCC 35469 / DSM 13698 / CCUG 18766 / IAM 14443 / JCM 21226 / LMG 7866 / NBRC 102419 / NCTC 12128 / CDC 0568-73)</name>
    <dbReference type="NCBI Taxonomy" id="585054"/>
    <lineage>
        <taxon>Bacteria</taxon>
        <taxon>Pseudomonadati</taxon>
        <taxon>Pseudomonadota</taxon>
        <taxon>Gammaproteobacteria</taxon>
        <taxon>Enterobacterales</taxon>
        <taxon>Enterobacteriaceae</taxon>
        <taxon>Escherichia</taxon>
    </lineage>
</organism>
<sequence>MVGLEKNDPLMLARQLPIKSVALILAGGRGTRLKDLTNKRAKPAVHFGGKFRIIDFALSNCINSGIRRIGVITQYQSHTLVQHIQRGWSFFNEEMNEFVDLLPAQQRMKGENWYRGTADAVTQNLDIIRRYKAEYVVILAGDHIYKQDYSRMLIDHVEKGARCTVACMPVPIQEASAFGVMAVDQDEKIIEFVEKPANPPSMPNDPTRSLASMGIYVFDADYLYELLEEDDNDENSSHDFGKDIIPKITQAGMAYAHPFPLSCVQSDPDSEPYWRDVGTLEAYWKANLDLASVVPELDMYDQHWPIRTYNESLPPAKFVQDRSGSHGMTLNSLVSGGCVISGSVVVQSVLFSRVRVNSFCNIDSAVLLPEVWVGRSCRLRRCVIDRACVIPEGMVIGENAEEDARRFYRSEEGIVLVTREMLRKLGHKQER</sequence>
<proteinExistence type="inferred from homology"/>
<feature type="chain" id="PRO_1000130483" description="Glucose-1-phosphate adenylyltransferase">
    <location>
        <begin position="1"/>
        <end position="431"/>
    </location>
</feature>
<feature type="binding site" evidence="1">
    <location>
        <position position="39"/>
    </location>
    <ligand>
        <name>beta-D-fructose 1,6-bisphosphate</name>
        <dbReference type="ChEBI" id="CHEBI:32966"/>
    </ligand>
</feature>
<feature type="binding site" evidence="1">
    <location>
        <position position="40"/>
    </location>
    <ligand>
        <name>AMP</name>
        <dbReference type="ChEBI" id="CHEBI:456215"/>
    </ligand>
</feature>
<feature type="binding site" evidence="1">
    <location>
        <position position="46"/>
    </location>
    <ligand>
        <name>AMP</name>
        <dbReference type="ChEBI" id="CHEBI:456215"/>
    </ligand>
</feature>
<feature type="binding site" evidence="1">
    <location>
        <position position="52"/>
    </location>
    <ligand>
        <name>AMP</name>
        <dbReference type="ChEBI" id="CHEBI:456215"/>
    </ligand>
</feature>
<feature type="binding site" evidence="1">
    <location>
        <position position="114"/>
    </location>
    <ligand>
        <name>alpha-D-glucose 1-phosphate</name>
        <dbReference type="ChEBI" id="CHEBI:58601"/>
    </ligand>
</feature>
<feature type="binding site" evidence="1">
    <location>
        <position position="130"/>
    </location>
    <ligand>
        <name>AMP</name>
        <dbReference type="ChEBI" id="CHEBI:456215"/>
    </ligand>
</feature>
<feature type="binding site" evidence="1">
    <location>
        <position position="179"/>
    </location>
    <ligand>
        <name>alpha-D-glucose 1-phosphate</name>
        <dbReference type="ChEBI" id="CHEBI:58601"/>
    </ligand>
</feature>
<feature type="binding site" evidence="1">
    <location>
        <begin position="194"/>
        <end position="195"/>
    </location>
    <ligand>
        <name>alpha-D-glucose 1-phosphate</name>
        <dbReference type="ChEBI" id="CHEBI:58601"/>
    </ligand>
</feature>
<feature type="binding site" evidence="1">
    <location>
        <position position="212"/>
    </location>
    <ligand>
        <name>alpha-D-glucose 1-phosphate</name>
        <dbReference type="ChEBI" id="CHEBI:58601"/>
    </ligand>
</feature>
<feature type="binding site" evidence="1">
    <location>
        <position position="370"/>
    </location>
    <ligand>
        <name>AMP</name>
        <dbReference type="ChEBI" id="CHEBI:456215"/>
    </ligand>
</feature>
<feature type="binding site" evidence="1">
    <location>
        <position position="386"/>
    </location>
    <ligand>
        <name>AMP</name>
        <dbReference type="ChEBI" id="CHEBI:456215"/>
    </ligand>
</feature>
<feature type="binding site" evidence="1">
    <location>
        <begin position="419"/>
        <end position="423"/>
    </location>
    <ligand>
        <name>beta-D-fructose 1,6-bisphosphate</name>
        <dbReference type="ChEBI" id="CHEBI:32966"/>
    </ligand>
</feature>
<feature type="binding site" evidence="1">
    <location>
        <begin position="429"/>
        <end position="431"/>
    </location>
    <ligand>
        <name>beta-D-fructose 1,6-bisphosphate</name>
        <dbReference type="ChEBI" id="CHEBI:32966"/>
    </ligand>
</feature>
<feature type="site" description="Could play a key role in the communication between the regulatory and the substrate sites" evidence="1">
    <location>
        <position position="74"/>
    </location>
</feature>
<feature type="site" description="Could play a key role in the communication between the regulatory and the substrate sites" evidence="1">
    <location>
        <position position="113"/>
    </location>
</feature>